<dbReference type="EMBL" id="BA000022">
    <property type="protein sequence ID" value="BAA18464.1"/>
    <property type="molecule type" value="Genomic_DNA"/>
</dbReference>
<dbReference type="PIR" id="S76205">
    <property type="entry name" value="S76205"/>
</dbReference>
<dbReference type="FunCoup" id="P74369">
    <property type="interactions" value="83"/>
</dbReference>
<dbReference type="IntAct" id="P74369">
    <property type="interactions" value="2"/>
</dbReference>
<dbReference type="STRING" id="1148.gene:10499341"/>
<dbReference type="PaxDb" id="1148-1653551"/>
<dbReference type="EnsemblBacteria" id="BAA18464">
    <property type="protein sequence ID" value="BAA18464"/>
    <property type="gene ID" value="BAA18464"/>
</dbReference>
<dbReference type="KEGG" id="syn:slr1647"/>
<dbReference type="eggNOG" id="COG0390">
    <property type="taxonomic scope" value="Bacteria"/>
</dbReference>
<dbReference type="InParanoid" id="P74369"/>
<dbReference type="PhylomeDB" id="P74369"/>
<dbReference type="Proteomes" id="UP000001425">
    <property type="component" value="Chromosome"/>
</dbReference>
<dbReference type="GO" id="GO:0005886">
    <property type="term" value="C:plasma membrane"/>
    <property type="evidence" value="ECO:0000318"/>
    <property type="project" value="GO_Central"/>
</dbReference>
<dbReference type="InterPro" id="IPR005226">
    <property type="entry name" value="UPF0014_fam"/>
</dbReference>
<dbReference type="PANTHER" id="PTHR30028:SF0">
    <property type="entry name" value="PROTEIN ALUMINUM SENSITIVE 3"/>
    <property type="match status" value="1"/>
</dbReference>
<dbReference type="PANTHER" id="PTHR30028">
    <property type="entry name" value="UPF0014 INNER MEMBRANE PROTEIN YBBM-RELATED"/>
    <property type="match status" value="1"/>
</dbReference>
<dbReference type="Pfam" id="PF03649">
    <property type="entry name" value="UPF0014"/>
    <property type="match status" value="1"/>
</dbReference>
<proteinExistence type="inferred from homology"/>
<accession>P74369</accession>
<keyword id="KW-1003">Cell membrane</keyword>
<keyword id="KW-0472">Membrane</keyword>
<keyword id="KW-1185">Reference proteome</keyword>
<keyword id="KW-0812">Transmembrane</keyword>
<keyword id="KW-1133">Transmembrane helix</keyword>
<evidence type="ECO:0000255" key="1"/>
<evidence type="ECO:0000305" key="2"/>
<gene>
    <name type="ordered locus">slr1647</name>
</gene>
<name>Y1647_SYNY3</name>
<reference key="1">
    <citation type="journal article" date="1996" name="DNA Res.">
        <title>Sequence analysis of the genome of the unicellular cyanobacterium Synechocystis sp. strain PCC6803. II. Sequence determination of the entire genome and assignment of potential protein-coding regions.</title>
        <authorList>
            <person name="Kaneko T."/>
            <person name="Sato S."/>
            <person name="Kotani H."/>
            <person name="Tanaka A."/>
            <person name="Asamizu E."/>
            <person name="Nakamura Y."/>
            <person name="Miyajima N."/>
            <person name="Hirosawa M."/>
            <person name="Sugiura M."/>
            <person name="Sasamoto S."/>
            <person name="Kimura T."/>
            <person name="Hosouchi T."/>
            <person name="Matsuno A."/>
            <person name="Muraki A."/>
            <person name="Nakazaki N."/>
            <person name="Naruo K."/>
            <person name="Okumura S."/>
            <person name="Shimpo S."/>
            <person name="Takeuchi C."/>
            <person name="Wada T."/>
            <person name="Watanabe A."/>
            <person name="Yamada M."/>
            <person name="Yasuda M."/>
            <person name="Tabata S."/>
        </authorList>
    </citation>
    <scope>NUCLEOTIDE SEQUENCE [LARGE SCALE GENOMIC DNA]</scope>
    <source>
        <strain>ATCC 27184 / PCC 6803 / Kazusa</strain>
    </source>
</reference>
<feature type="chain" id="PRO_0000217859" description="UPF0014 membrane protein slr1647">
    <location>
        <begin position="1"/>
        <end position="259"/>
    </location>
</feature>
<feature type="transmembrane region" description="Helical" evidence="1">
    <location>
        <begin position="4"/>
        <end position="24"/>
    </location>
</feature>
<feature type="transmembrane region" description="Helical" evidence="1">
    <location>
        <begin position="34"/>
        <end position="54"/>
    </location>
</feature>
<feature type="transmembrane region" description="Helical" evidence="1">
    <location>
        <begin position="55"/>
        <end position="75"/>
    </location>
</feature>
<feature type="transmembrane region" description="Helical" evidence="1">
    <location>
        <begin position="98"/>
        <end position="118"/>
    </location>
</feature>
<feature type="transmembrane region" description="Helical" evidence="1">
    <location>
        <begin position="128"/>
        <end position="148"/>
    </location>
</feature>
<feature type="transmembrane region" description="Helical" evidence="1">
    <location>
        <begin position="195"/>
        <end position="215"/>
    </location>
</feature>
<feature type="transmembrane region" description="Helical" evidence="1">
    <location>
        <begin position="225"/>
        <end position="245"/>
    </location>
</feature>
<sequence>MEHALIELDWADIGWMLGLLGAAIALLQWQGLNLTGQLLWAGGRTILQLIVVGYFLAVVFSLDNPWAVLLVLAIMLTIAAVVARNRINPRSKSLFGWLWLSLGASTAISLGYALVVIIQPPQWYSPQYLIPLTGMILGQTMNSASLAGERLASAIQQNPREIETHLCLGATPGQAIASYRRAAIRASLIPTVNQMMVVGLVSLPGMLTGQVLAGGDPLNASVYQILIMFLILLTNTLSTIAVTATVYRQYFNQHQQLLV</sequence>
<organism>
    <name type="scientific">Synechocystis sp. (strain ATCC 27184 / PCC 6803 / Kazusa)</name>
    <dbReference type="NCBI Taxonomy" id="1111708"/>
    <lineage>
        <taxon>Bacteria</taxon>
        <taxon>Bacillati</taxon>
        <taxon>Cyanobacteriota</taxon>
        <taxon>Cyanophyceae</taxon>
        <taxon>Synechococcales</taxon>
        <taxon>Merismopediaceae</taxon>
        <taxon>Synechocystis</taxon>
    </lineage>
</organism>
<comment type="subcellular location">
    <subcellularLocation>
        <location evidence="2">Cell membrane</location>
        <topology evidence="2">Multi-pass membrane protein</topology>
    </subcellularLocation>
</comment>
<comment type="similarity">
    <text evidence="2">Belongs to the UPF0014 family.</text>
</comment>
<protein>
    <recommendedName>
        <fullName>UPF0014 membrane protein slr1647</fullName>
    </recommendedName>
</protein>